<organism>
    <name type="scientific">Haemophilus influenzae (strain 86-028NP)</name>
    <dbReference type="NCBI Taxonomy" id="281310"/>
    <lineage>
        <taxon>Bacteria</taxon>
        <taxon>Pseudomonadati</taxon>
        <taxon>Pseudomonadota</taxon>
        <taxon>Gammaproteobacteria</taxon>
        <taxon>Pasteurellales</taxon>
        <taxon>Pasteurellaceae</taxon>
        <taxon>Haemophilus</taxon>
    </lineage>
</organism>
<accession>Q4QND9</accession>
<dbReference type="EMBL" id="CP000057">
    <property type="protein sequence ID" value="AAX87458.1"/>
    <property type="molecule type" value="Genomic_DNA"/>
</dbReference>
<dbReference type="RefSeq" id="WP_011272028.1">
    <property type="nucleotide sequence ID" value="NC_007146.2"/>
</dbReference>
<dbReference type="SMR" id="Q4QND9"/>
<dbReference type="KEGG" id="hit:NTHI0524"/>
<dbReference type="HOGENOM" id="CLU_086669_0_0_6"/>
<dbReference type="Proteomes" id="UP000002525">
    <property type="component" value="Chromosome"/>
</dbReference>
<dbReference type="GO" id="GO:0005737">
    <property type="term" value="C:cytoplasm"/>
    <property type="evidence" value="ECO:0007669"/>
    <property type="project" value="UniProtKB-SubCell"/>
</dbReference>
<dbReference type="GO" id="GO:0003677">
    <property type="term" value="F:DNA binding"/>
    <property type="evidence" value="ECO:0007669"/>
    <property type="project" value="InterPro"/>
</dbReference>
<dbReference type="GO" id="GO:0004519">
    <property type="term" value="F:endonuclease activity"/>
    <property type="evidence" value="ECO:0007669"/>
    <property type="project" value="UniProtKB-UniRule"/>
</dbReference>
<dbReference type="GO" id="GO:0006304">
    <property type="term" value="P:DNA modification"/>
    <property type="evidence" value="ECO:0007669"/>
    <property type="project" value="InterPro"/>
</dbReference>
<dbReference type="GO" id="GO:0006298">
    <property type="term" value="P:mismatch repair"/>
    <property type="evidence" value="ECO:0007669"/>
    <property type="project" value="UniProtKB-UniRule"/>
</dbReference>
<dbReference type="CDD" id="cd00583">
    <property type="entry name" value="MutH-like"/>
    <property type="match status" value="1"/>
</dbReference>
<dbReference type="Gene3D" id="3.40.600.10">
    <property type="entry name" value="DNA mismatch repair MutH/Restriction endonuclease, type II"/>
    <property type="match status" value="1"/>
</dbReference>
<dbReference type="HAMAP" id="MF_00759">
    <property type="entry name" value="MutH"/>
    <property type="match status" value="1"/>
</dbReference>
<dbReference type="InterPro" id="IPR004230">
    <property type="entry name" value="DNA_mismatch_repair_MutH"/>
</dbReference>
<dbReference type="InterPro" id="IPR011337">
    <property type="entry name" value="DNA_rep_MutH/RE_typeII_Sau3AI"/>
</dbReference>
<dbReference type="InterPro" id="IPR037057">
    <property type="entry name" value="DNA_rep_MutH/T2_RE_sf"/>
</dbReference>
<dbReference type="InterPro" id="IPR011335">
    <property type="entry name" value="Restrct_endonuc-II-like"/>
</dbReference>
<dbReference type="NCBIfam" id="TIGR02248">
    <property type="entry name" value="mutH_TIGR"/>
    <property type="match status" value="1"/>
</dbReference>
<dbReference type="NCBIfam" id="NF003458">
    <property type="entry name" value="PRK05070.1"/>
    <property type="match status" value="1"/>
</dbReference>
<dbReference type="Pfam" id="PF02976">
    <property type="entry name" value="MutH"/>
    <property type="match status" value="1"/>
</dbReference>
<dbReference type="SMART" id="SM00927">
    <property type="entry name" value="MutH"/>
    <property type="match status" value="1"/>
</dbReference>
<dbReference type="SUPFAM" id="SSF52980">
    <property type="entry name" value="Restriction endonuclease-like"/>
    <property type="match status" value="1"/>
</dbReference>
<feature type="chain" id="PRO_1000046698" description="DNA mismatch repair protein MutH">
    <location>
        <begin position="1"/>
        <end position="223"/>
    </location>
</feature>
<comment type="function">
    <text evidence="1">Sequence-specific endonuclease that cleaves unmethylated GATC sequences. It is involved in DNA mismatch repair.</text>
</comment>
<comment type="subcellular location">
    <subcellularLocation>
        <location evidence="1">Cytoplasm</location>
    </subcellularLocation>
</comment>
<comment type="similarity">
    <text evidence="1">Belongs to the MutH family.</text>
</comment>
<sequence length="223" mass="24924">MIPQTLEQLLSQAQSIAGLTFGELADELHIPVPIDLKRDKGWVGMLLERALGATAGSKAEQDFSHLGVELKTLPINAEGYPLETTFVSLAPLVQNSGIKWENSHVRHKLSCVLWIPIEGSRHIPLRERHIGAPIFWKPTAEQERQLKQDWEELMDLIVLGKLEQITARIGEVMQLRPKGANSRAVTKGIGKNGEIIDTLPLGFYLRKEFTAQILKAFLDVKPL</sequence>
<protein>
    <recommendedName>
        <fullName evidence="1">DNA mismatch repair protein MutH</fullName>
    </recommendedName>
    <alternativeName>
        <fullName evidence="1">Methyl-directed mismatch repair protein</fullName>
    </alternativeName>
</protein>
<gene>
    <name evidence="1" type="primary">mutH</name>
    <name type="ordered locus">NTHI0524</name>
</gene>
<proteinExistence type="inferred from homology"/>
<evidence type="ECO:0000255" key="1">
    <source>
        <dbReference type="HAMAP-Rule" id="MF_00759"/>
    </source>
</evidence>
<reference key="1">
    <citation type="journal article" date="2005" name="J. Bacteriol.">
        <title>Genomic sequence of an otitis media isolate of nontypeable Haemophilus influenzae: comparative study with H. influenzae serotype d, strain KW20.</title>
        <authorList>
            <person name="Harrison A."/>
            <person name="Dyer D.W."/>
            <person name="Gillaspy A."/>
            <person name="Ray W.C."/>
            <person name="Mungur R."/>
            <person name="Carson M.B."/>
            <person name="Zhong H."/>
            <person name="Gipson J."/>
            <person name="Gipson M."/>
            <person name="Johnson L.S."/>
            <person name="Lewis L."/>
            <person name="Bakaletz L.O."/>
            <person name="Munson R.S. Jr."/>
        </authorList>
    </citation>
    <scope>NUCLEOTIDE SEQUENCE [LARGE SCALE GENOMIC DNA]</scope>
    <source>
        <strain>86-028NP</strain>
    </source>
</reference>
<name>MUTH_HAEI8</name>
<keyword id="KW-0963">Cytoplasm</keyword>
<keyword id="KW-0227">DNA damage</keyword>
<keyword id="KW-0234">DNA repair</keyword>
<keyword id="KW-0255">Endonuclease</keyword>
<keyword id="KW-0378">Hydrolase</keyword>
<keyword id="KW-0540">Nuclease</keyword>